<dbReference type="EMBL" id="CU928160">
    <property type="protein sequence ID" value="CAR00261.1"/>
    <property type="molecule type" value="Genomic_DNA"/>
</dbReference>
<dbReference type="RefSeq" id="WP_000613955.1">
    <property type="nucleotide sequence ID" value="NC_011741.1"/>
</dbReference>
<dbReference type="SMR" id="B7M1M4"/>
<dbReference type="GeneID" id="93778677"/>
<dbReference type="KEGG" id="ecr:ECIAI1_3459"/>
<dbReference type="HOGENOM" id="CLU_095071_2_1_6"/>
<dbReference type="GO" id="GO:0022625">
    <property type="term" value="C:cytosolic large ribosomal subunit"/>
    <property type="evidence" value="ECO:0007669"/>
    <property type="project" value="TreeGrafter"/>
</dbReference>
<dbReference type="GO" id="GO:0070180">
    <property type="term" value="F:large ribosomal subunit rRNA binding"/>
    <property type="evidence" value="ECO:0007669"/>
    <property type="project" value="TreeGrafter"/>
</dbReference>
<dbReference type="GO" id="GO:0003735">
    <property type="term" value="F:structural constituent of ribosome"/>
    <property type="evidence" value="ECO:0007669"/>
    <property type="project" value="InterPro"/>
</dbReference>
<dbReference type="GO" id="GO:0006412">
    <property type="term" value="P:translation"/>
    <property type="evidence" value="ECO:0007669"/>
    <property type="project" value="UniProtKB-UniRule"/>
</dbReference>
<dbReference type="CDD" id="cd00337">
    <property type="entry name" value="Ribosomal_uL14"/>
    <property type="match status" value="1"/>
</dbReference>
<dbReference type="FunFam" id="2.40.150.20:FF:000001">
    <property type="entry name" value="50S ribosomal protein L14"/>
    <property type="match status" value="1"/>
</dbReference>
<dbReference type="Gene3D" id="2.40.150.20">
    <property type="entry name" value="Ribosomal protein L14"/>
    <property type="match status" value="1"/>
</dbReference>
<dbReference type="HAMAP" id="MF_01367">
    <property type="entry name" value="Ribosomal_uL14"/>
    <property type="match status" value="1"/>
</dbReference>
<dbReference type="InterPro" id="IPR000218">
    <property type="entry name" value="Ribosomal_uL14"/>
</dbReference>
<dbReference type="InterPro" id="IPR005745">
    <property type="entry name" value="Ribosomal_uL14_bac-type"/>
</dbReference>
<dbReference type="InterPro" id="IPR019972">
    <property type="entry name" value="Ribosomal_uL14_CS"/>
</dbReference>
<dbReference type="InterPro" id="IPR036853">
    <property type="entry name" value="Ribosomal_uL14_sf"/>
</dbReference>
<dbReference type="NCBIfam" id="TIGR01067">
    <property type="entry name" value="rplN_bact"/>
    <property type="match status" value="1"/>
</dbReference>
<dbReference type="PANTHER" id="PTHR11761">
    <property type="entry name" value="50S/60S RIBOSOMAL PROTEIN L14/L23"/>
    <property type="match status" value="1"/>
</dbReference>
<dbReference type="PANTHER" id="PTHR11761:SF3">
    <property type="entry name" value="LARGE RIBOSOMAL SUBUNIT PROTEIN UL14M"/>
    <property type="match status" value="1"/>
</dbReference>
<dbReference type="Pfam" id="PF00238">
    <property type="entry name" value="Ribosomal_L14"/>
    <property type="match status" value="1"/>
</dbReference>
<dbReference type="SMART" id="SM01374">
    <property type="entry name" value="Ribosomal_L14"/>
    <property type="match status" value="1"/>
</dbReference>
<dbReference type="SUPFAM" id="SSF50193">
    <property type="entry name" value="Ribosomal protein L14"/>
    <property type="match status" value="1"/>
</dbReference>
<dbReference type="PROSITE" id="PS00049">
    <property type="entry name" value="RIBOSOMAL_L14"/>
    <property type="match status" value="1"/>
</dbReference>
<reference key="1">
    <citation type="journal article" date="2009" name="PLoS Genet.">
        <title>Organised genome dynamics in the Escherichia coli species results in highly diverse adaptive paths.</title>
        <authorList>
            <person name="Touchon M."/>
            <person name="Hoede C."/>
            <person name="Tenaillon O."/>
            <person name="Barbe V."/>
            <person name="Baeriswyl S."/>
            <person name="Bidet P."/>
            <person name="Bingen E."/>
            <person name="Bonacorsi S."/>
            <person name="Bouchier C."/>
            <person name="Bouvet O."/>
            <person name="Calteau A."/>
            <person name="Chiapello H."/>
            <person name="Clermont O."/>
            <person name="Cruveiller S."/>
            <person name="Danchin A."/>
            <person name="Diard M."/>
            <person name="Dossat C."/>
            <person name="Karoui M.E."/>
            <person name="Frapy E."/>
            <person name="Garry L."/>
            <person name="Ghigo J.M."/>
            <person name="Gilles A.M."/>
            <person name="Johnson J."/>
            <person name="Le Bouguenec C."/>
            <person name="Lescat M."/>
            <person name="Mangenot S."/>
            <person name="Martinez-Jehanne V."/>
            <person name="Matic I."/>
            <person name="Nassif X."/>
            <person name="Oztas S."/>
            <person name="Petit M.A."/>
            <person name="Pichon C."/>
            <person name="Rouy Z."/>
            <person name="Ruf C.S."/>
            <person name="Schneider D."/>
            <person name="Tourret J."/>
            <person name="Vacherie B."/>
            <person name="Vallenet D."/>
            <person name="Medigue C."/>
            <person name="Rocha E.P.C."/>
            <person name="Denamur E."/>
        </authorList>
    </citation>
    <scope>NUCLEOTIDE SEQUENCE [LARGE SCALE GENOMIC DNA]</scope>
    <source>
        <strain>IAI1</strain>
    </source>
</reference>
<gene>
    <name evidence="1" type="primary">rplN</name>
    <name type="ordered locus">ECIAI1_3459</name>
</gene>
<sequence>MIQEQTMLNVADNSGARRVMCIKVLGGSHRRYAGVGDIIKITIKEAIPRGKVKKGDVLKAVVVRTKKGVRRPDGSVIRFDGNACVLLNNNSEQPIGTRIFGPVTRELRSEKFMKIISLAPEVL</sequence>
<keyword id="KW-0687">Ribonucleoprotein</keyword>
<keyword id="KW-0689">Ribosomal protein</keyword>
<keyword id="KW-0694">RNA-binding</keyword>
<keyword id="KW-0699">rRNA-binding</keyword>
<feature type="chain" id="PRO_1000144265" description="Large ribosomal subunit protein uL14">
    <location>
        <begin position="1"/>
        <end position="123"/>
    </location>
</feature>
<accession>B7M1M4</accession>
<name>RL14_ECO8A</name>
<proteinExistence type="inferred from homology"/>
<comment type="function">
    <text evidence="1">Binds to 23S rRNA. Forms part of two intersubunit bridges in the 70S ribosome.</text>
</comment>
<comment type="subunit">
    <text evidence="1">Part of the 50S ribosomal subunit. Forms a cluster with proteins L3 and L19. In the 70S ribosome, L14 and L19 interact and together make contacts with the 16S rRNA in bridges B5 and B8.</text>
</comment>
<comment type="similarity">
    <text evidence="1">Belongs to the universal ribosomal protein uL14 family.</text>
</comment>
<protein>
    <recommendedName>
        <fullName evidence="1">Large ribosomal subunit protein uL14</fullName>
    </recommendedName>
    <alternativeName>
        <fullName evidence="2">50S ribosomal protein L14</fullName>
    </alternativeName>
</protein>
<organism>
    <name type="scientific">Escherichia coli O8 (strain IAI1)</name>
    <dbReference type="NCBI Taxonomy" id="585034"/>
    <lineage>
        <taxon>Bacteria</taxon>
        <taxon>Pseudomonadati</taxon>
        <taxon>Pseudomonadota</taxon>
        <taxon>Gammaproteobacteria</taxon>
        <taxon>Enterobacterales</taxon>
        <taxon>Enterobacteriaceae</taxon>
        <taxon>Escherichia</taxon>
    </lineage>
</organism>
<evidence type="ECO:0000255" key="1">
    <source>
        <dbReference type="HAMAP-Rule" id="MF_01367"/>
    </source>
</evidence>
<evidence type="ECO:0000305" key="2"/>